<reference key="1">
    <citation type="submission" date="2005-07" db="EMBL/GenBank/DDBJ databases">
        <authorList>
            <person name="Mural R.J."/>
            <person name="Adams M.D."/>
            <person name="Myers E.W."/>
            <person name="Smith H.O."/>
            <person name="Venter J.C."/>
        </authorList>
    </citation>
    <scope>NUCLEOTIDE SEQUENCE [LARGE SCALE GENOMIC DNA]</scope>
</reference>
<reference key="2">
    <citation type="journal article" date="1994" name="Genomics">
        <title>Isolation and chromosomal localization of a novel human G-protein-coupled receptor (GPR3) expressed predominantly in the central nervous system.</title>
        <authorList>
            <person name="Iismaa T.P."/>
            <person name="Kiefer J."/>
            <person name="Liu M.L."/>
            <person name="Baker E."/>
            <person name="Sutherland G.R."/>
            <person name="Shine J."/>
        </authorList>
    </citation>
    <scope>NUCLEOTIDE SEQUENCE [MRNA] OF 6-117</scope>
    <source>
        <strain>New England Deaconess Hospital</strain>
        <tissue>Pancreas</tissue>
    </source>
</reference>
<reference key="3">
    <citation type="journal article" date="2002" name="Cell. Signal.">
        <title>Sphingosine 1-phosphate is a ligand of the human gpr3, gpr6 and gpr12 family of constitutively active G protein-coupled receptors.</title>
        <authorList>
            <person name="Uhlenbrock K."/>
            <person name="Gassenhuber J."/>
            <person name="Kostenis E."/>
        </authorList>
    </citation>
    <scope>NUCLEOTIDE SEQUENCE [MRNA] OF 9-329</scope>
</reference>
<reference key="4">
    <citation type="journal article" date="2007" name="J. Biol. Chem.">
        <title>Neural expression of G protein-coupled receptors GPR3, GPR6, and GPR12 up-regulates cyclic AMP levels and promotes neurite outgrowth.</title>
        <authorList>
            <person name="Tanaka S."/>
            <person name="Ishii K."/>
            <person name="Kasai K."/>
            <person name="Yoon S.O."/>
            <person name="Saeki Y."/>
        </authorList>
    </citation>
    <scope>FUNCTION</scope>
    <scope>TISSUE SPECIFICITY</scope>
</reference>
<reference key="5">
    <citation type="journal article" date="2022" name="Mol. Cell. Neurosci.">
        <title>GPR3 accelerates neurite outgrowth and neuronal polarity formation via PI3 kinase-mediating signaling pathway in cultured primary neurons.</title>
        <authorList>
            <person name="Tanaka S."/>
            <person name="Shimada N."/>
            <person name="Shiraki H."/>
            <person name="Miyagi T."/>
            <person name="Harada K."/>
            <person name="Hide I."/>
            <person name="Sakai N."/>
        </authorList>
    </citation>
    <scope>FUNCTION</scope>
    <scope>TISSUE SPECIFICITY</scope>
</reference>
<evidence type="ECO:0000250" key="1"/>
<evidence type="ECO:0000250" key="2">
    <source>
        <dbReference type="UniProtKB" id="P35413"/>
    </source>
</evidence>
<evidence type="ECO:0000255" key="3"/>
<evidence type="ECO:0000255" key="4">
    <source>
        <dbReference type="PROSITE-ProRule" id="PRU00521"/>
    </source>
</evidence>
<evidence type="ECO:0000269" key="5">
    <source>
    </source>
</evidence>
<evidence type="ECO:0000269" key="6">
    <source>
    </source>
</evidence>
<evidence type="ECO:0000305" key="7"/>
<protein>
    <recommendedName>
        <fullName>G-protein coupled receptor 3</fullName>
    </recommendedName>
    <alternativeName>
        <fullName>G-protein-coupled receptor R4</fullName>
    </alternativeName>
</protein>
<accession>Q8K1Q3</accession>
<accession>Q63230</accession>
<gene>
    <name type="primary">Gpr3</name>
</gene>
<comment type="function">
    <text evidence="2 5 6">Constitutively active G-protein coupled receptor that maintains high 3'-5'-cyclic adenosine monophosphate (cAMP) levels that a plays a role in serveral processes including meiotic arrest in oocytes or neuronal development via activation of numerous intracellular signaling pathways (PubMed:17284443). Acts as an essential activator of thermogenic adipocytes and drives thermogenesis via its intrinsic G(s)-coupling activity without the requirement of a ligand (By similarity). Has a potential role in modulating a number of brain functions, including behavioral responses to stress (By similarity), amyloid-beta peptide generation in neurons (By similarity). Stimulates neurite outgrowth in cerebellar granular neurons modulated via PKA, ERK, and most strongly PI3K-mediated signaling pathways (PubMed:34871769).</text>
</comment>
<comment type="subcellular location">
    <subcellularLocation>
        <location>Cell membrane</location>
        <topology>Multi-pass membrane protein</topology>
    </subcellularLocation>
</comment>
<comment type="tissue specificity">
    <text evidence="5">Abundantly expressed in granule neurons at all development stages. Enriched in the longest tips of neurites during differentiation of hippocampal neurons.</text>
</comment>
<comment type="similarity">
    <text evidence="4">Belongs to the G-protein coupled receptor 1 family.</text>
</comment>
<comment type="sequence caution" evidence="7">
    <conflict type="frameshift">
        <sequence resource="EMBL-CDS" id="CAD20634"/>
    </conflict>
</comment>
<sequence length="329" mass="35327">MMWGAGRSMAWFSAGSGSVNVSIDPAEEPTGPATLLPSPRAWDVVLCISGTLVSCENALVVAIIVGTPAFRAPMFLLVGSLAVADLLAGLGLVLHFAADFCIGSPEMSLVLVGVLATAFTASIGSLLAITVDRYLSLYNALTYYSETTVTRTYVMLALVWVGALGLGLVPVLAWNCRDGLTTCGVVYPLSKNHLVVLAIVFFMVFGIMLQLYAQICRIVCRHAQQIALQRHLLPASHYVATRKGIATLAVVLGAFAACWLPFTVYCLLGDANSPPLYTYLTLLPATYNSMINPVIYAFRNQDVQKVLWAICCCCSTSKIPFRSRSPSDV</sequence>
<proteinExistence type="evidence at transcript level"/>
<organism>
    <name type="scientific">Rattus norvegicus</name>
    <name type="common">Rat</name>
    <dbReference type="NCBI Taxonomy" id="10116"/>
    <lineage>
        <taxon>Eukaryota</taxon>
        <taxon>Metazoa</taxon>
        <taxon>Chordata</taxon>
        <taxon>Craniata</taxon>
        <taxon>Vertebrata</taxon>
        <taxon>Euteleostomi</taxon>
        <taxon>Mammalia</taxon>
        <taxon>Eutheria</taxon>
        <taxon>Euarchontoglires</taxon>
        <taxon>Glires</taxon>
        <taxon>Rodentia</taxon>
        <taxon>Myomorpha</taxon>
        <taxon>Muroidea</taxon>
        <taxon>Muridae</taxon>
        <taxon>Murinae</taxon>
        <taxon>Rattus</taxon>
    </lineage>
</organism>
<feature type="chain" id="PRO_0000379597" description="G-protein coupled receptor 3">
    <location>
        <begin position="1"/>
        <end position="329"/>
    </location>
</feature>
<feature type="topological domain" description="Extracellular" evidence="3">
    <location>
        <begin position="1"/>
        <end position="43"/>
    </location>
</feature>
<feature type="transmembrane region" description="Helical; Name=1" evidence="3">
    <location>
        <begin position="44"/>
        <end position="64"/>
    </location>
</feature>
<feature type="topological domain" description="Cytoplasmic" evidence="3">
    <location>
        <begin position="65"/>
        <end position="73"/>
    </location>
</feature>
<feature type="transmembrane region" description="Helical; Name=2" evidence="3">
    <location>
        <begin position="74"/>
        <end position="94"/>
    </location>
</feature>
<feature type="topological domain" description="Extracellular" evidence="3">
    <location>
        <begin position="95"/>
        <end position="108"/>
    </location>
</feature>
<feature type="transmembrane region" description="Helical; Name=3" evidence="3">
    <location>
        <begin position="109"/>
        <end position="129"/>
    </location>
</feature>
<feature type="topological domain" description="Cytoplasmic" evidence="3">
    <location>
        <begin position="130"/>
        <end position="153"/>
    </location>
</feature>
<feature type="transmembrane region" description="Helical; Name=4" evidence="3">
    <location>
        <begin position="154"/>
        <end position="174"/>
    </location>
</feature>
<feature type="topological domain" description="Extracellular" evidence="3">
    <location>
        <begin position="175"/>
        <end position="192"/>
    </location>
</feature>
<feature type="transmembrane region" description="Helical; Name=5" evidence="3">
    <location>
        <begin position="193"/>
        <end position="213"/>
    </location>
</feature>
<feature type="topological domain" description="Cytoplasmic" evidence="3">
    <location>
        <begin position="214"/>
        <end position="247"/>
    </location>
</feature>
<feature type="transmembrane region" description="Helical; Name=6" evidence="3">
    <location>
        <begin position="248"/>
        <end position="268"/>
    </location>
</feature>
<feature type="topological domain" description="Extracellular" evidence="3">
    <location>
        <begin position="269"/>
        <end position="277"/>
    </location>
</feature>
<feature type="transmembrane region" description="Helical; Name=7" evidence="3">
    <location>
        <begin position="278"/>
        <end position="298"/>
    </location>
</feature>
<feature type="topological domain" description="Cytoplasmic" evidence="3">
    <location>
        <begin position="299"/>
        <end position="329"/>
    </location>
</feature>
<feature type="modified residue" description="Phosphoserine" evidence="3">
    <location>
        <position position="323"/>
    </location>
</feature>
<feature type="modified residue" description="Phosphoserine" evidence="3">
    <location>
        <position position="325"/>
    </location>
</feature>
<feature type="modified residue" description="Phosphoserine" evidence="3">
    <location>
        <position position="327"/>
    </location>
</feature>
<feature type="lipid moiety-binding region" description="S-palmitoyl cysteine" evidence="1">
    <location>
        <position position="312"/>
    </location>
</feature>
<feature type="glycosylation site" description="N-linked (GlcNAc...) asparagine" evidence="3">
    <location>
        <position position="20"/>
    </location>
</feature>
<feature type="sequence conflict" description="In Ref. 2; AAA73559." evidence="7" ref="2">
    <original>V</original>
    <variation>M</variation>
    <location>
        <position position="61"/>
    </location>
</feature>
<feature type="sequence conflict" description="In Ref. 2; AAA73559." evidence="7" ref="2">
    <original>T</original>
    <variation>M</variation>
    <location>
        <position position="117"/>
    </location>
</feature>
<dbReference type="EMBL" id="CH473968">
    <property type="protein sequence ID" value="EDL80660.1"/>
    <property type="molecule type" value="Genomic_DNA"/>
</dbReference>
<dbReference type="EMBL" id="L32829">
    <property type="protein sequence ID" value="AAA73559.1"/>
    <property type="molecule type" value="mRNA"/>
</dbReference>
<dbReference type="EMBL" id="AJ427482">
    <property type="protein sequence ID" value="CAD20634.1"/>
    <property type="status" value="ALT_FRAME"/>
    <property type="molecule type" value="mRNA"/>
</dbReference>
<dbReference type="RefSeq" id="NP_714949.2">
    <property type="nucleotide sequence ID" value="NM_153727.2"/>
</dbReference>
<dbReference type="RefSeq" id="XP_006239068.1">
    <property type="nucleotide sequence ID" value="XM_006239006.3"/>
</dbReference>
<dbReference type="SMR" id="Q8K1Q3"/>
<dbReference type="FunCoup" id="Q8K1Q3">
    <property type="interactions" value="108"/>
</dbReference>
<dbReference type="STRING" id="10116.ENSRNOP00000068107"/>
<dbReference type="GlyCosmos" id="Q8K1Q3">
    <property type="glycosylation" value="1 site, No reported glycans"/>
</dbReference>
<dbReference type="GlyGen" id="Q8K1Q3">
    <property type="glycosylation" value="2 sites"/>
</dbReference>
<dbReference type="PhosphoSitePlus" id="Q8K1Q3"/>
<dbReference type="PaxDb" id="10116-ENSRNOP00000068107"/>
<dbReference type="Ensembl" id="ENSRNOT00000076866.2">
    <property type="protein sequence ID" value="ENSRNOP00000068417.2"/>
    <property type="gene ID" value="ENSRNOG00000009540.6"/>
</dbReference>
<dbReference type="GeneID" id="266769"/>
<dbReference type="KEGG" id="rno:266769"/>
<dbReference type="UCSC" id="RGD:628686">
    <property type="organism name" value="rat"/>
</dbReference>
<dbReference type="AGR" id="RGD:628686"/>
<dbReference type="CTD" id="2827"/>
<dbReference type="RGD" id="628686">
    <property type="gene designation" value="Gpr3"/>
</dbReference>
<dbReference type="eggNOG" id="KOG3656">
    <property type="taxonomic scope" value="Eukaryota"/>
</dbReference>
<dbReference type="GeneTree" id="ENSGT01110000267224"/>
<dbReference type="InParanoid" id="Q8K1Q3"/>
<dbReference type="OMA" id="FRTPMFL"/>
<dbReference type="OrthoDB" id="10042731at2759"/>
<dbReference type="PhylomeDB" id="Q8K1Q3"/>
<dbReference type="TreeFam" id="TF330052"/>
<dbReference type="PRO" id="PR:Q8K1Q3"/>
<dbReference type="Proteomes" id="UP000002494">
    <property type="component" value="Chromosome 5"/>
</dbReference>
<dbReference type="Proteomes" id="UP000234681">
    <property type="component" value="Chromosome 5"/>
</dbReference>
<dbReference type="GO" id="GO:0005737">
    <property type="term" value="C:cytoplasm"/>
    <property type="evidence" value="ECO:0000266"/>
    <property type="project" value="RGD"/>
</dbReference>
<dbReference type="GO" id="GO:0031965">
    <property type="term" value="C:nuclear membrane"/>
    <property type="evidence" value="ECO:0000266"/>
    <property type="project" value="RGD"/>
</dbReference>
<dbReference type="GO" id="GO:0005886">
    <property type="term" value="C:plasma membrane"/>
    <property type="evidence" value="ECO:0000266"/>
    <property type="project" value="RGD"/>
</dbReference>
<dbReference type="GO" id="GO:0038036">
    <property type="term" value="F:sphingosine-1-phosphate receptor activity"/>
    <property type="evidence" value="ECO:0000318"/>
    <property type="project" value="GO_Central"/>
</dbReference>
<dbReference type="GO" id="GO:0007189">
    <property type="term" value="P:adenylate cyclase-activating G protein-coupled receptor signaling pathway"/>
    <property type="evidence" value="ECO:0000266"/>
    <property type="project" value="RGD"/>
</dbReference>
<dbReference type="GO" id="GO:0007199">
    <property type="term" value="P:G protein-coupled receptor signaling pathway coupled to cGMP nucleotide second messenger"/>
    <property type="evidence" value="ECO:0000266"/>
    <property type="project" value="RGD"/>
</dbReference>
<dbReference type="GO" id="GO:0045786">
    <property type="term" value="P:negative regulation of cell cycle"/>
    <property type="evidence" value="ECO:0000266"/>
    <property type="project" value="RGD"/>
</dbReference>
<dbReference type="GO" id="GO:0008285">
    <property type="term" value="P:negative regulation of cell population proliferation"/>
    <property type="evidence" value="ECO:0000266"/>
    <property type="project" value="RGD"/>
</dbReference>
<dbReference type="GO" id="GO:1904145">
    <property type="term" value="P:negative regulation of meiotic cell cycle process involved in oocyte maturation"/>
    <property type="evidence" value="ECO:0000266"/>
    <property type="project" value="RGD"/>
</dbReference>
<dbReference type="GO" id="GO:1900194">
    <property type="term" value="P:negative regulation of oocyte maturation"/>
    <property type="evidence" value="ECO:0000266"/>
    <property type="project" value="RGD"/>
</dbReference>
<dbReference type="GO" id="GO:0141163">
    <property type="term" value="P:positive regulation of cAMP/PKA signal transduction"/>
    <property type="evidence" value="ECO:0000314"/>
    <property type="project" value="RGD"/>
</dbReference>
<dbReference type="GO" id="GO:0120162">
    <property type="term" value="P:positive regulation of cold-induced thermogenesis"/>
    <property type="evidence" value="ECO:0000250"/>
    <property type="project" value="YuBioLab"/>
</dbReference>
<dbReference type="GO" id="GO:0051480">
    <property type="term" value="P:regulation of cytosolic calcium ion concentration"/>
    <property type="evidence" value="ECO:0000314"/>
    <property type="project" value="RGD"/>
</dbReference>
<dbReference type="GO" id="GO:0040020">
    <property type="term" value="P:regulation of meiotic nuclear division"/>
    <property type="evidence" value="ECO:0000266"/>
    <property type="project" value="RGD"/>
</dbReference>
<dbReference type="GO" id="GO:0019222">
    <property type="term" value="P:regulation of metabolic process"/>
    <property type="evidence" value="ECO:0000318"/>
    <property type="project" value="GO_Central"/>
</dbReference>
<dbReference type="CDD" id="cd15963">
    <property type="entry name" value="7tmA_GPR3"/>
    <property type="match status" value="1"/>
</dbReference>
<dbReference type="FunFam" id="1.20.1070.10:FF:000067">
    <property type="entry name" value="G-protein coupled receptor 12"/>
    <property type="match status" value="1"/>
</dbReference>
<dbReference type="Gene3D" id="1.20.1070.10">
    <property type="entry name" value="Rhodopsin 7-helix transmembrane proteins"/>
    <property type="match status" value="1"/>
</dbReference>
<dbReference type="InterPro" id="IPR000276">
    <property type="entry name" value="GPCR_Rhodpsn"/>
</dbReference>
<dbReference type="InterPro" id="IPR017452">
    <property type="entry name" value="GPCR_Rhodpsn_7TM"/>
</dbReference>
<dbReference type="InterPro" id="IPR000984">
    <property type="entry name" value="GPR3"/>
</dbReference>
<dbReference type="InterPro" id="IPR000723">
    <property type="entry name" value="GPR_3/6/12_orphan"/>
</dbReference>
<dbReference type="PANTHER" id="PTHR22750">
    <property type="entry name" value="G-PROTEIN COUPLED RECEPTOR"/>
    <property type="match status" value="1"/>
</dbReference>
<dbReference type="Pfam" id="PF00001">
    <property type="entry name" value="7tm_1"/>
    <property type="match status" value="1"/>
</dbReference>
<dbReference type="PRINTS" id="PR00237">
    <property type="entry name" value="GPCRRHODOPSN"/>
</dbReference>
<dbReference type="PRINTS" id="PR00648">
    <property type="entry name" value="GPR3ORPHANR"/>
</dbReference>
<dbReference type="PRINTS" id="PR00644">
    <property type="entry name" value="GPRORPHANR"/>
</dbReference>
<dbReference type="SUPFAM" id="SSF81321">
    <property type="entry name" value="Family A G protein-coupled receptor-like"/>
    <property type="match status" value="1"/>
</dbReference>
<dbReference type="PROSITE" id="PS00237">
    <property type="entry name" value="G_PROTEIN_RECEP_F1_1"/>
    <property type="match status" value="1"/>
</dbReference>
<dbReference type="PROSITE" id="PS50262">
    <property type="entry name" value="G_PROTEIN_RECEP_F1_2"/>
    <property type="match status" value="1"/>
</dbReference>
<name>GPR3_RAT</name>
<keyword id="KW-1003">Cell membrane</keyword>
<keyword id="KW-0297">G-protein coupled receptor</keyword>
<keyword id="KW-0325">Glycoprotein</keyword>
<keyword id="KW-0449">Lipoprotein</keyword>
<keyword id="KW-0472">Membrane</keyword>
<keyword id="KW-0564">Palmitate</keyword>
<keyword id="KW-0597">Phosphoprotein</keyword>
<keyword id="KW-0675">Receptor</keyword>
<keyword id="KW-1185">Reference proteome</keyword>
<keyword id="KW-0807">Transducer</keyword>
<keyword id="KW-0812">Transmembrane</keyword>
<keyword id="KW-1133">Transmembrane helix</keyword>